<accession>A9BMN2</accession>
<protein>
    <recommendedName>
        <fullName evidence="1">Small ribosomal subunit protein uS2</fullName>
    </recommendedName>
    <alternativeName>
        <fullName evidence="2">30S ribosomal protein S2</fullName>
    </alternativeName>
</protein>
<proteinExistence type="inferred from homology"/>
<feature type="chain" id="PRO_1000115013" description="Small ribosomal subunit protein uS2">
    <location>
        <begin position="1"/>
        <end position="250"/>
    </location>
</feature>
<sequence length="250" mass="27438">MSVTMREMLEAGVHFGHQTRFWNPKMAPFIFGHRNKIHIINLEKSLPMFQDAQKFVKQLASNGGTILMVGTKRQAREMVAAEAQRAGVPFVDQRWLGGMLTNFKTVKTSIKRLKEMKAQQEAGLEAMSKKEQLMFVRELEKLEKDIGGIQDMNSLPDAIFVIDVGFHKIAVAEAKKLGIPLVGVVDSNHNPEGIDYVIPGNDDSAKAVQLYAQGIADAILEGRAAALTDVVKAASGESGDEFVEVEESAA</sequence>
<organism>
    <name type="scientific">Delftia acidovorans (strain DSM 14801 / SPH-1)</name>
    <dbReference type="NCBI Taxonomy" id="398578"/>
    <lineage>
        <taxon>Bacteria</taxon>
        <taxon>Pseudomonadati</taxon>
        <taxon>Pseudomonadota</taxon>
        <taxon>Betaproteobacteria</taxon>
        <taxon>Burkholderiales</taxon>
        <taxon>Comamonadaceae</taxon>
        <taxon>Delftia</taxon>
    </lineage>
</organism>
<dbReference type="EMBL" id="CP000884">
    <property type="protein sequence ID" value="ABX37577.1"/>
    <property type="molecule type" value="Genomic_DNA"/>
</dbReference>
<dbReference type="RefSeq" id="WP_012206747.1">
    <property type="nucleotide sequence ID" value="NC_010002.1"/>
</dbReference>
<dbReference type="SMR" id="A9BMN2"/>
<dbReference type="STRING" id="398578.Daci_4948"/>
<dbReference type="GeneID" id="24119411"/>
<dbReference type="KEGG" id="dac:Daci_4948"/>
<dbReference type="eggNOG" id="COG0052">
    <property type="taxonomic scope" value="Bacteria"/>
</dbReference>
<dbReference type="HOGENOM" id="CLU_040318_2_2_4"/>
<dbReference type="Proteomes" id="UP000000784">
    <property type="component" value="Chromosome"/>
</dbReference>
<dbReference type="GO" id="GO:0022627">
    <property type="term" value="C:cytosolic small ribosomal subunit"/>
    <property type="evidence" value="ECO:0007669"/>
    <property type="project" value="TreeGrafter"/>
</dbReference>
<dbReference type="GO" id="GO:0003735">
    <property type="term" value="F:structural constituent of ribosome"/>
    <property type="evidence" value="ECO:0007669"/>
    <property type="project" value="InterPro"/>
</dbReference>
<dbReference type="GO" id="GO:0006412">
    <property type="term" value="P:translation"/>
    <property type="evidence" value="ECO:0007669"/>
    <property type="project" value="UniProtKB-UniRule"/>
</dbReference>
<dbReference type="CDD" id="cd01425">
    <property type="entry name" value="RPS2"/>
    <property type="match status" value="1"/>
</dbReference>
<dbReference type="FunFam" id="1.10.287.610:FF:000001">
    <property type="entry name" value="30S ribosomal protein S2"/>
    <property type="match status" value="1"/>
</dbReference>
<dbReference type="Gene3D" id="3.40.50.10490">
    <property type="entry name" value="Glucose-6-phosphate isomerase like protein, domain 1"/>
    <property type="match status" value="1"/>
</dbReference>
<dbReference type="Gene3D" id="1.10.287.610">
    <property type="entry name" value="Helix hairpin bin"/>
    <property type="match status" value="1"/>
</dbReference>
<dbReference type="HAMAP" id="MF_00291_B">
    <property type="entry name" value="Ribosomal_uS2_B"/>
    <property type="match status" value="1"/>
</dbReference>
<dbReference type="InterPro" id="IPR001865">
    <property type="entry name" value="Ribosomal_uS2"/>
</dbReference>
<dbReference type="InterPro" id="IPR005706">
    <property type="entry name" value="Ribosomal_uS2_bac/mit/plastid"/>
</dbReference>
<dbReference type="InterPro" id="IPR018130">
    <property type="entry name" value="Ribosomal_uS2_CS"/>
</dbReference>
<dbReference type="InterPro" id="IPR023591">
    <property type="entry name" value="Ribosomal_uS2_flav_dom_sf"/>
</dbReference>
<dbReference type="NCBIfam" id="TIGR01011">
    <property type="entry name" value="rpsB_bact"/>
    <property type="match status" value="1"/>
</dbReference>
<dbReference type="PANTHER" id="PTHR12534">
    <property type="entry name" value="30S RIBOSOMAL PROTEIN S2 PROKARYOTIC AND ORGANELLAR"/>
    <property type="match status" value="1"/>
</dbReference>
<dbReference type="PANTHER" id="PTHR12534:SF0">
    <property type="entry name" value="SMALL RIBOSOMAL SUBUNIT PROTEIN US2M"/>
    <property type="match status" value="1"/>
</dbReference>
<dbReference type="Pfam" id="PF00318">
    <property type="entry name" value="Ribosomal_S2"/>
    <property type="match status" value="1"/>
</dbReference>
<dbReference type="PRINTS" id="PR00395">
    <property type="entry name" value="RIBOSOMALS2"/>
</dbReference>
<dbReference type="SUPFAM" id="SSF52313">
    <property type="entry name" value="Ribosomal protein S2"/>
    <property type="match status" value="1"/>
</dbReference>
<dbReference type="PROSITE" id="PS00962">
    <property type="entry name" value="RIBOSOMAL_S2_1"/>
    <property type="match status" value="1"/>
</dbReference>
<comment type="similarity">
    <text evidence="1">Belongs to the universal ribosomal protein uS2 family.</text>
</comment>
<keyword id="KW-1185">Reference proteome</keyword>
<keyword id="KW-0687">Ribonucleoprotein</keyword>
<keyword id="KW-0689">Ribosomal protein</keyword>
<reference key="1">
    <citation type="submission" date="2007-11" db="EMBL/GenBank/DDBJ databases">
        <title>Complete sequence of Delftia acidovorans DSM 14801 / SPH-1.</title>
        <authorList>
            <person name="Copeland A."/>
            <person name="Lucas S."/>
            <person name="Lapidus A."/>
            <person name="Barry K."/>
            <person name="Glavina del Rio T."/>
            <person name="Dalin E."/>
            <person name="Tice H."/>
            <person name="Pitluck S."/>
            <person name="Lowry S."/>
            <person name="Clum A."/>
            <person name="Schmutz J."/>
            <person name="Larimer F."/>
            <person name="Land M."/>
            <person name="Hauser L."/>
            <person name="Kyrpides N."/>
            <person name="Kim E."/>
            <person name="Schleheck D."/>
            <person name="Richardson P."/>
        </authorList>
    </citation>
    <scope>NUCLEOTIDE SEQUENCE [LARGE SCALE GENOMIC DNA]</scope>
    <source>
        <strain>DSM 14801 / SPH-1</strain>
    </source>
</reference>
<evidence type="ECO:0000255" key="1">
    <source>
        <dbReference type="HAMAP-Rule" id="MF_00291"/>
    </source>
</evidence>
<evidence type="ECO:0000305" key="2"/>
<gene>
    <name evidence="1" type="primary">rpsB</name>
    <name type="ordered locus">Daci_4948</name>
</gene>
<name>RS2_DELAS</name>